<comment type="function">
    <text evidence="1">Part of a membrane-bound complex that couples electron transfer with translocation of ions across the membrane. Required to maintain the reduced state of SoxR.</text>
</comment>
<comment type="subunit">
    <text evidence="1">The complex is composed of six subunits: RsxA, RsxB, RsxC, RsxD, RsxE and RsxG.</text>
</comment>
<comment type="subcellular location">
    <subcellularLocation>
        <location evidence="1">Cell inner membrane</location>
        <topology evidence="1">Multi-pass membrane protein</topology>
    </subcellularLocation>
</comment>
<comment type="similarity">
    <text evidence="1">Belongs to the NqrDE/RnfAE family.</text>
</comment>
<protein>
    <recommendedName>
        <fullName evidence="1">Ion-translocating oxidoreductase complex subunit E</fullName>
        <ecNumber evidence="1">7.-.-.-</ecNumber>
    </recommendedName>
    <alternativeName>
        <fullName evidence="1">Rsx electron transport complex subunit E</fullName>
    </alternativeName>
</protein>
<reference key="1">
    <citation type="journal article" date="2009" name="J. Bacteriol.">
        <title>Complete genome sequence and comparative genome analysis of enteropathogenic Escherichia coli O127:H6 strain E2348/69.</title>
        <authorList>
            <person name="Iguchi A."/>
            <person name="Thomson N.R."/>
            <person name="Ogura Y."/>
            <person name="Saunders D."/>
            <person name="Ooka T."/>
            <person name="Henderson I.R."/>
            <person name="Harris D."/>
            <person name="Asadulghani M."/>
            <person name="Kurokawa K."/>
            <person name="Dean P."/>
            <person name="Kenny B."/>
            <person name="Quail M.A."/>
            <person name="Thurston S."/>
            <person name="Dougan G."/>
            <person name="Hayashi T."/>
            <person name="Parkhill J."/>
            <person name="Frankel G."/>
        </authorList>
    </citation>
    <scope>NUCLEOTIDE SEQUENCE [LARGE SCALE GENOMIC DNA]</scope>
    <source>
        <strain>E2348/69 / EPEC</strain>
    </source>
</reference>
<dbReference type="EC" id="7.-.-.-" evidence="1"/>
<dbReference type="EMBL" id="FM180568">
    <property type="protein sequence ID" value="CAS09267.1"/>
    <property type="molecule type" value="Genomic_DNA"/>
</dbReference>
<dbReference type="RefSeq" id="WP_001289646.1">
    <property type="nucleotide sequence ID" value="NC_011601.1"/>
</dbReference>
<dbReference type="SMR" id="B7URX3"/>
<dbReference type="KEGG" id="ecg:E2348C_1719"/>
<dbReference type="HOGENOM" id="CLU_046659_1_0_6"/>
<dbReference type="Proteomes" id="UP000008205">
    <property type="component" value="Chromosome"/>
</dbReference>
<dbReference type="GO" id="GO:0005886">
    <property type="term" value="C:plasma membrane"/>
    <property type="evidence" value="ECO:0007669"/>
    <property type="project" value="UniProtKB-SubCell"/>
</dbReference>
<dbReference type="GO" id="GO:0022900">
    <property type="term" value="P:electron transport chain"/>
    <property type="evidence" value="ECO:0007669"/>
    <property type="project" value="UniProtKB-UniRule"/>
</dbReference>
<dbReference type="HAMAP" id="MF_00478">
    <property type="entry name" value="RsxE_RnfE"/>
    <property type="match status" value="1"/>
</dbReference>
<dbReference type="InterPro" id="IPR003667">
    <property type="entry name" value="NqrDE/RnfAE"/>
</dbReference>
<dbReference type="InterPro" id="IPR010968">
    <property type="entry name" value="RnfE"/>
</dbReference>
<dbReference type="NCBIfam" id="NF009070">
    <property type="entry name" value="PRK12405.1"/>
    <property type="match status" value="1"/>
</dbReference>
<dbReference type="NCBIfam" id="TIGR01948">
    <property type="entry name" value="rnfE"/>
    <property type="match status" value="1"/>
</dbReference>
<dbReference type="PANTHER" id="PTHR30586">
    <property type="entry name" value="ELECTRON TRANSPORT COMPLEX PROTEIN RNFE"/>
    <property type="match status" value="1"/>
</dbReference>
<dbReference type="PANTHER" id="PTHR30586:SF0">
    <property type="entry name" value="ION-TRANSLOCATING OXIDOREDUCTASE COMPLEX SUBUNIT E"/>
    <property type="match status" value="1"/>
</dbReference>
<dbReference type="Pfam" id="PF02508">
    <property type="entry name" value="Rnf-Nqr"/>
    <property type="match status" value="1"/>
</dbReference>
<dbReference type="PIRSF" id="PIRSF006102">
    <property type="entry name" value="NQR_DE"/>
    <property type="match status" value="1"/>
</dbReference>
<sequence>MSEIKDVIVQGLWKNNSALVQLLGLCPLLAVTSTATNALGLGLATTLVLTLTNLTISTLRHWTPAEIRIPIYVMIIASVVSAVQMLINAYAFGLYQSLGIFIPLIVTNCIVVGRAEAFAAKKGPALSALDGFSIGMGATCAMFVLGSLREIIGNGTLFDGADALLGSWAKVLRVEIFHTDSPFLLAMLPPGAFIGLGLMLAGKYLIDEKMKKRRTEAAAERALPNGETGNV</sequence>
<gene>
    <name evidence="1" type="primary">rsxE</name>
    <name type="ordered locus">E2348C_1719</name>
</gene>
<name>RSXE_ECO27</name>
<organism>
    <name type="scientific">Escherichia coli O127:H6 (strain E2348/69 / EPEC)</name>
    <dbReference type="NCBI Taxonomy" id="574521"/>
    <lineage>
        <taxon>Bacteria</taxon>
        <taxon>Pseudomonadati</taxon>
        <taxon>Pseudomonadota</taxon>
        <taxon>Gammaproteobacteria</taxon>
        <taxon>Enterobacterales</taxon>
        <taxon>Enterobacteriaceae</taxon>
        <taxon>Escherichia</taxon>
    </lineage>
</organism>
<evidence type="ECO:0000255" key="1">
    <source>
        <dbReference type="HAMAP-Rule" id="MF_00478"/>
    </source>
</evidence>
<accession>B7URX3</accession>
<keyword id="KW-0997">Cell inner membrane</keyword>
<keyword id="KW-1003">Cell membrane</keyword>
<keyword id="KW-0249">Electron transport</keyword>
<keyword id="KW-0472">Membrane</keyword>
<keyword id="KW-1185">Reference proteome</keyword>
<keyword id="KW-1278">Translocase</keyword>
<keyword id="KW-0812">Transmembrane</keyword>
<keyword id="KW-1133">Transmembrane helix</keyword>
<keyword id="KW-0813">Transport</keyword>
<feature type="chain" id="PRO_1000135557" description="Ion-translocating oxidoreductase complex subunit E">
    <location>
        <begin position="1"/>
        <end position="231"/>
    </location>
</feature>
<feature type="transmembrane region" description="Helical" evidence="1">
    <location>
        <begin position="18"/>
        <end position="38"/>
    </location>
</feature>
<feature type="transmembrane region" description="Helical" evidence="1">
    <location>
        <begin position="39"/>
        <end position="59"/>
    </location>
</feature>
<feature type="transmembrane region" description="Helical" evidence="1">
    <location>
        <begin position="63"/>
        <end position="83"/>
    </location>
</feature>
<feature type="transmembrane region" description="Helical" evidence="1">
    <location>
        <begin position="86"/>
        <end position="106"/>
    </location>
</feature>
<feature type="transmembrane region" description="Helical" evidence="1">
    <location>
        <begin position="125"/>
        <end position="145"/>
    </location>
</feature>
<feature type="transmembrane region" description="Helical" evidence="1">
    <location>
        <begin position="182"/>
        <end position="202"/>
    </location>
</feature>
<proteinExistence type="inferred from homology"/>